<keyword id="KW-0131">Cell cycle</keyword>
<keyword id="KW-0132">Cell division</keyword>
<keyword id="KW-0137">Centromere</keyword>
<keyword id="KW-0158">Chromosome</keyword>
<keyword id="KW-1017">Isopeptide bond</keyword>
<keyword id="KW-0479">Metal-binding</keyword>
<keyword id="KW-0498">Mitosis</keyword>
<keyword id="KW-0539">Nucleus</keyword>
<keyword id="KW-0597">Phosphoprotein</keyword>
<keyword id="KW-1185">Reference proteome</keyword>
<keyword id="KW-0832">Ubl conjugation</keyword>
<keyword id="KW-0862">Zinc</keyword>
<dbReference type="EMBL" id="AL954205">
    <property type="protein sequence ID" value="CAH18576.1"/>
    <property type="molecule type" value="Genomic_DNA"/>
</dbReference>
<dbReference type="RefSeq" id="NP_001065279.1">
    <property type="nucleotide sequence ID" value="NM_001071811.1"/>
</dbReference>
<dbReference type="SMR" id="Q68UT5"/>
<dbReference type="FunCoup" id="Q68UT5">
    <property type="interactions" value="2647"/>
</dbReference>
<dbReference type="STRING" id="9598.ENSPTRP00000053994"/>
<dbReference type="PaxDb" id="9598-ENSPTRP00000053994"/>
<dbReference type="Ensembl" id="ENSPTRT00000025830.4">
    <property type="protein sequence ID" value="ENSPTRP00000053994.1"/>
    <property type="gene ID" value="ENSPTRG00000013850.4"/>
</dbReference>
<dbReference type="GeneID" id="473952"/>
<dbReference type="KEGG" id="ptr:473952"/>
<dbReference type="CTD" id="54069"/>
<dbReference type="VGNC" id="VGNC:1138">
    <property type="gene designation" value="MIS18A"/>
</dbReference>
<dbReference type="eggNOG" id="ENOG502S9R8">
    <property type="taxonomic scope" value="Eukaryota"/>
</dbReference>
<dbReference type="GeneTree" id="ENSGT00940000154267"/>
<dbReference type="HOGENOM" id="CLU_101031_0_0_1"/>
<dbReference type="InParanoid" id="Q68UT5"/>
<dbReference type="OMA" id="EMKMLVM"/>
<dbReference type="OrthoDB" id="16533at9604"/>
<dbReference type="TreeFam" id="TF333200"/>
<dbReference type="Proteomes" id="UP000002277">
    <property type="component" value="Chromosome 21"/>
</dbReference>
<dbReference type="Proteomes" id="UP000243858">
    <property type="component" value="Chromosome 22"/>
</dbReference>
<dbReference type="Bgee" id="ENSPTRG00000013850">
    <property type="expression patterns" value="Expressed in fibroblast and 18 other cell types or tissues"/>
</dbReference>
<dbReference type="GO" id="GO:0098654">
    <property type="term" value="C:CENP-A recruiting complex"/>
    <property type="evidence" value="ECO:0007669"/>
    <property type="project" value="Ensembl"/>
</dbReference>
<dbReference type="GO" id="GO:0000785">
    <property type="term" value="C:chromatin"/>
    <property type="evidence" value="ECO:0000318"/>
    <property type="project" value="GO_Central"/>
</dbReference>
<dbReference type="GO" id="GO:0000775">
    <property type="term" value="C:chromosome, centromeric region"/>
    <property type="evidence" value="ECO:0000318"/>
    <property type="project" value="GO_Central"/>
</dbReference>
<dbReference type="GO" id="GO:0005829">
    <property type="term" value="C:cytosol"/>
    <property type="evidence" value="ECO:0007669"/>
    <property type="project" value="Ensembl"/>
</dbReference>
<dbReference type="GO" id="GO:0005654">
    <property type="term" value="C:nucleoplasm"/>
    <property type="evidence" value="ECO:0007669"/>
    <property type="project" value="Ensembl"/>
</dbReference>
<dbReference type="GO" id="GO:0005634">
    <property type="term" value="C:nucleus"/>
    <property type="evidence" value="ECO:0000318"/>
    <property type="project" value="GO_Central"/>
</dbReference>
<dbReference type="GO" id="GO:0042802">
    <property type="term" value="F:identical protein binding"/>
    <property type="evidence" value="ECO:0007669"/>
    <property type="project" value="Ensembl"/>
</dbReference>
<dbReference type="GO" id="GO:0046872">
    <property type="term" value="F:metal ion binding"/>
    <property type="evidence" value="ECO:0007669"/>
    <property type="project" value="UniProtKB-KW"/>
</dbReference>
<dbReference type="GO" id="GO:0030674">
    <property type="term" value="F:protein-macromolecule adaptor activity"/>
    <property type="evidence" value="ECO:0007669"/>
    <property type="project" value="Ensembl"/>
</dbReference>
<dbReference type="GO" id="GO:0051301">
    <property type="term" value="P:cell division"/>
    <property type="evidence" value="ECO:0007669"/>
    <property type="project" value="UniProtKB-KW"/>
</dbReference>
<dbReference type="GO" id="GO:0034080">
    <property type="term" value="P:CENP-A containing chromatin assembly"/>
    <property type="evidence" value="ECO:0000318"/>
    <property type="project" value="GO_Central"/>
</dbReference>
<dbReference type="GO" id="GO:0007059">
    <property type="term" value="P:chromosome segregation"/>
    <property type="evidence" value="ECO:0000318"/>
    <property type="project" value="GO_Central"/>
</dbReference>
<dbReference type="GO" id="GO:0140462">
    <property type="term" value="P:pericentric heterochromatin organization"/>
    <property type="evidence" value="ECO:0007669"/>
    <property type="project" value="Ensembl"/>
</dbReference>
<dbReference type="GO" id="GO:0071459">
    <property type="term" value="P:protein localization to chromosome, centromeric region"/>
    <property type="evidence" value="ECO:0007669"/>
    <property type="project" value="Ensembl"/>
</dbReference>
<dbReference type="InterPro" id="IPR034752">
    <property type="entry name" value="Mis18"/>
</dbReference>
<dbReference type="InterPro" id="IPR004910">
    <property type="entry name" value="Yippee/Mis18/Cereblon"/>
</dbReference>
<dbReference type="PANTHER" id="PTHR16431">
    <property type="entry name" value="NEUROGENIC PROTEIN MASTERMIND"/>
    <property type="match status" value="1"/>
</dbReference>
<dbReference type="PANTHER" id="PTHR16431:SF2">
    <property type="entry name" value="PROTEIN MIS18-ALPHA"/>
    <property type="match status" value="1"/>
</dbReference>
<dbReference type="Pfam" id="PF03226">
    <property type="entry name" value="Yippee-Mis18"/>
    <property type="match status" value="1"/>
</dbReference>
<dbReference type="PROSITE" id="PS51793">
    <property type="entry name" value="MIS18"/>
    <property type="match status" value="1"/>
</dbReference>
<sequence>MAGVRSLRCSRGCAGGCECGDKGKCRDSSLLGKRLSEDSSRHQLLQKWASMWSSMSEDASVADMERARLEEAAAAEERPLVFLCSGCRRPLGDSLSWVASQEDTNCILLRCVSCNVSVDKEQKLSKREKENGCVLETLCCAGCSLNLGYVYRCTPKNLDYKRDLFCLSVEAIESYVLGSSEKQIVSEDKELFNLESRVEIEKSLTQMEDVLKALQMKLWEAESKLSFATCKS</sequence>
<evidence type="ECO:0000250" key="1">
    <source>
        <dbReference type="UniProtKB" id="Q9NYP9"/>
    </source>
</evidence>
<evidence type="ECO:0000255" key="2">
    <source>
        <dbReference type="PROSITE-ProRule" id="PRU01129"/>
    </source>
</evidence>
<reference key="1">
    <citation type="journal article" date="2004" name="Nature">
        <title>DNA sequence and comparative analysis of chimpanzee chromosome 22.</title>
        <authorList>
            <person name="Watanabe H."/>
            <person name="Fujiyama A."/>
            <person name="Hattori M."/>
            <person name="Taylor T.D."/>
            <person name="Toyoda A."/>
            <person name="Kuroki Y."/>
            <person name="Noguchi H."/>
            <person name="BenKahla A."/>
            <person name="Lehrach H."/>
            <person name="Sudbrak R."/>
            <person name="Kube M."/>
            <person name="Taenzer S."/>
            <person name="Galgoczy P."/>
            <person name="Platzer M."/>
            <person name="Scharfe M."/>
            <person name="Nordsiek G."/>
            <person name="Bloecker H."/>
            <person name="Hellmann I."/>
            <person name="Khaitovich P."/>
            <person name="Paeaebo S."/>
            <person name="Reinhardt R."/>
            <person name="Zheng H.-J."/>
            <person name="Zhang X.-L."/>
            <person name="Zhu G.-F."/>
            <person name="Wang B.-F."/>
            <person name="Fu G."/>
            <person name="Ren S.-X."/>
            <person name="Zhao G.-P."/>
            <person name="Chen Z."/>
            <person name="Lee Y.-S."/>
            <person name="Cheong J.-E."/>
            <person name="Choi S.-H."/>
            <person name="Wu K.-M."/>
            <person name="Liu T.-T."/>
            <person name="Hsiao K.-J."/>
            <person name="Tsai S.-F."/>
            <person name="Kim C.-G."/>
            <person name="Oota S."/>
            <person name="Kitano T."/>
            <person name="Kohara Y."/>
            <person name="Saitou N."/>
            <person name="Park H.-S."/>
            <person name="Wang S.-Y."/>
            <person name="Yaspo M.-L."/>
            <person name="Sakaki Y."/>
        </authorList>
    </citation>
    <scope>NUCLEOTIDE SEQUENCE [LARGE SCALE GENOMIC DNA]</scope>
</reference>
<protein>
    <recommendedName>
        <fullName>Protein Mis18-alpha</fullName>
    </recommendedName>
</protein>
<proteinExistence type="inferred from homology"/>
<organism>
    <name type="scientific">Pan troglodytes</name>
    <name type="common">Chimpanzee</name>
    <dbReference type="NCBI Taxonomy" id="9598"/>
    <lineage>
        <taxon>Eukaryota</taxon>
        <taxon>Metazoa</taxon>
        <taxon>Chordata</taxon>
        <taxon>Craniata</taxon>
        <taxon>Vertebrata</taxon>
        <taxon>Euteleostomi</taxon>
        <taxon>Mammalia</taxon>
        <taxon>Eutheria</taxon>
        <taxon>Euarchontoglires</taxon>
        <taxon>Primates</taxon>
        <taxon>Haplorrhini</taxon>
        <taxon>Catarrhini</taxon>
        <taxon>Hominidae</taxon>
        <taxon>Pan</taxon>
    </lineage>
</organism>
<name>MS18A_PANTR</name>
<feature type="chain" id="PRO_0000079516" description="Protein Mis18-alpha">
    <location>
        <begin position="1"/>
        <end position="232"/>
    </location>
</feature>
<feature type="domain" description="Mis18" evidence="2">
    <location>
        <begin position="79"/>
        <end position="177"/>
    </location>
</feature>
<feature type="binding site" evidence="2">
    <location>
        <position position="84"/>
    </location>
    <ligand>
        <name>Zn(2+)</name>
        <dbReference type="ChEBI" id="CHEBI:29105"/>
    </ligand>
</feature>
<feature type="binding site" evidence="2">
    <location>
        <position position="87"/>
    </location>
    <ligand>
        <name>Zn(2+)</name>
        <dbReference type="ChEBI" id="CHEBI:29105"/>
    </ligand>
</feature>
<feature type="binding site" evidence="2">
    <location>
        <position position="140"/>
    </location>
    <ligand>
        <name>Zn(2+)</name>
        <dbReference type="ChEBI" id="CHEBI:29105"/>
    </ligand>
</feature>
<feature type="binding site" evidence="2">
    <location>
        <position position="143"/>
    </location>
    <ligand>
        <name>Zn(2+)</name>
        <dbReference type="ChEBI" id="CHEBI:29105"/>
    </ligand>
</feature>
<feature type="modified residue" description="Phosphoserine" evidence="1">
    <location>
        <position position="36"/>
    </location>
</feature>
<feature type="modified residue" description="Phosphoserine" evidence="1">
    <location>
        <position position="39"/>
    </location>
</feature>
<feature type="modified residue" description="Phosphoserine" evidence="1">
    <location>
        <position position="40"/>
    </location>
</feature>
<feature type="modified residue" description="Phosphoserine" evidence="1">
    <location>
        <position position="232"/>
    </location>
</feature>
<feature type="cross-link" description="Glycyl lysine isopeptide (Lys-Gly) (interchain with G-Cter in SUMO2)" evidence="1">
    <location>
        <position position="161"/>
    </location>
</feature>
<gene>
    <name type="primary">MIS18A</name>
</gene>
<accession>Q68UT5</accession>
<comment type="function">
    <text evidence="1">Required for recruitment of CENPA to centromeres and normal chromosome segregation during mitosis.</text>
</comment>
<comment type="subunit">
    <text evidence="1">Homodimer, and heterodimer with OIP5/MIS18B. Identified in a complex containing MIS18A, OIP5/MIS18B, MIS18BP1, RBBP7 and RBBP4.</text>
</comment>
<comment type="subcellular location">
    <subcellularLocation>
        <location evidence="1">Nucleus</location>
    </subcellularLocation>
    <subcellularLocation>
        <location evidence="1">Chromosome</location>
    </subcellularLocation>
    <subcellularLocation>
        <location evidence="1">Chromosome</location>
        <location evidence="1">Centromere</location>
    </subcellularLocation>
    <text evidence="1">Associated with centromeres in interphase cells, from late anaphase to the G1 phase. Not detected on centromeres during earlier phases of mitosis. Associated with chromatin.</text>
</comment>
<comment type="similarity">
    <text evidence="2">Belongs to the mis18 family.</text>
</comment>